<organism>
    <name type="scientific">Saccharomyces cerevisiae (strain ATCC 204508 / S288c)</name>
    <name type="common">Baker's yeast</name>
    <dbReference type="NCBI Taxonomy" id="559292"/>
    <lineage>
        <taxon>Eukaryota</taxon>
        <taxon>Fungi</taxon>
        <taxon>Dikarya</taxon>
        <taxon>Ascomycota</taxon>
        <taxon>Saccharomycotina</taxon>
        <taxon>Saccharomycetes</taxon>
        <taxon>Saccharomycetales</taxon>
        <taxon>Saccharomycetaceae</taxon>
        <taxon>Saccharomyces</taxon>
    </lineage>
</organism>
<name>YO343_YEAST</name>
<reference key="1">
    <citation type="journal article" date="1996" name="Yeast">
        <title>Nucleotide sequence analysis of a 40 kb segment on the right arm of yeast chromosome XV reveals 18 open reading frames including a new pyruvate kinase and three homologues to chromosome I genes.</title>
        <authorList>
            <person name="Purnelle B."/>
            <person name="Goffeau A."/>
        </authorList>
    </citation>
    <scope>NUCLEOTIDE SEQUENCE [GENOMIC DNA]</scope>
    <source>
        <strain>ATCC 90843 / S288c / FY73</strain>
    </source>
</reference>
<reference key="2">
    <citation type="journal article" date="1997" name="Nature">
        <title>The nucleotide sequence of Saccharomyces cerevisiae chromosome XV.</title>
        <authorList>
            <person name="Dujon B."/>
            <person name="Albermann K."/>
            <person name="Aldea M."/>
            <person name="Alexandraki D."/>
            <person name="Ansorge W."/>
            <person name="Arino J."/>
            <person name="Benes V."/>
            <person name="Bohn C."/>
            <person name="Bolotin-Fukuhara M."/>
            <person name="Bordonne R."/>
            <person name="Boyer J."/>
            <person name="Camasses A."/>
            <person name="Casamayor A."/>
            <person name="Casas C."/>
            <person name="Cheret G."/>
            <person name="Cziepluch C."/>
            <person name="Daignan-Fornier B."/>
            <person name="Dang V.-D."/>
            <person name="de Haan M."/>
            <person name="Delius H."/>
            <person name="Durand P."/>
            <person name="Fairhead C."/>
            <person name="Feldmann H."/>
            <person name="Gaillon L."/>
            <person name="Galisson F."/>
            <person name="Gamo F.-J."/>
            <person name="Gancedo C."/>
            <person name="Goffeau A."/>
            <person name="Goulding S.E."/>
            <person name="Grivell L.A."/>
            <person name="Habbig B."/>
            <person name="Hand N.J."/>
            <person name="Hani J."/>
            <person name="Hattenhorst U."/>
            <person name="Hebling U."/>
            <person name="Hernando Y."/>
            <person name="Herrero E."/>
            <person name="Heumann K."/>
            <person name="Hiesel R."/>
            <person name="Hilger F."/>
            <person name="Hofmann B."/>
            <person name="Hollenberg C.P."/>
            <person name="Hughes B."/>
            <person name="Jauniaux J.-C."/>
            <person name="Kalogeropoulos A."/>
            <person name="Katsoulou C."/>
            <person name="Kordes E."/>
            <person name="Lafuente M.J."/>
            <person name="Landt O."/>
            <person name="Louis E.J."/>
            <person name="Maarse A.C."/>
            <person name="Madania A."/>
            <person name="Mannhaupt G."/>
            <person name="Marck C."/>
            <person name="Martin R.P."/>
            <person name="Mewes H.-W."/>
            <person name="Michaux G."/>
            <person name="Paces V."/>
            <person name="Parle-McDermott A.G."/>
            <person name="Pearson B.M."/>
            <person name="Perrin A."/>
            <person name="Pettersson B."/>
            <person name="Poch O."/>
            <person name="Pohl T.M."/>
            <person name="Poirey R."/>
            <person name="Portetelle D."/>
            <person name="Pujol A."/>
            <person name="Purnelle B."/>
            <person name="Ramezani Rad M."/>
            <person name="Rechmann S."/>
            <person name="Schwager C."/>
            <person name="Schweizer M."/>
            <person name="Sor F."/>
            <person name="Sterky F."/>
            <person name="Tarassov I.A."/>
            <person name="Teodoru C."/>
            <person name="Tettelin H."/>
            <person name="Thierry A."/>
            <person name="Tobiasch E."/>
            <person name="Tzermia M."/>
            <person name="Uhlen M."/>
            <person name="Unseld M."/>
            <person name="Valens M."/>
            <person name="Vandenbol M."/>
            <person name="Vetter I."/>
            <person name="Vlcek C."/>
            <person name="Voet M."/>
            <person name="Volckaert G."/>
            <person name="Voss H."/>
            <person name="Wambutt R."/>
            <person name="Wedler H."/>
            <person name="Wiemann S."/>
            <person name="Winsor B."/>
            <person name="Wolfe K.H."/>
            <person name="Zollner A."/>
            <person name="Zumstein E."/>
            <person name="Kleine K."/>
        </authorList>
    </citation>
    <scope>NUCLEOTIDE SEQUENCE [LARGE SCALE GENOMIC DNA]</scope>
    <source>
        <strain>ATCC 204508 / S288c</strain>
    </source>
</reference>
<reference key="3">
    <citation type="journal article" date="2014" name="G3 (Bethesda)">
        <title>The reference genome sequence of Saccharomyces cerevisiae: Then and now.</title>
        <authorList>
            <person name="Engel S.R."/>
            <person name="Dietrich F.S."/>
            <person name="Fisk D.G."/>
            <person name="Binkley G."/>
            <person name="Balakrishnan R."/>
            <person name="Costanzo M.C."/>
            <person name="Dwight S.S."/>
            <person name="Hitz B.C."/>
            <person name="Karra K."/>
            <person name="Nash R.S."/>
            <person name="Weng S."/>
            <person name="Wong E.D."/>
            <person name="Lloyd P."/>
            <person name="Skrzypek M.S."/>
            <person name="Miyasato S.R."/>
            <person name="Simison M."/>
            <person name="Cherry J.M."/>
        </authorList>
    </citation>
    <scope>GENOME REANNOTATION</scope>
    <source>
        <strain>ATCC 204508 / S288c</strain>
    </source>
</reference>
<reference key="4">
    <citation type="journal article" date="2007" name="Genome Res.">
        <title>Approaching a complete repository of sequence-verified protein-encoding clones for Saccharomyces cerevisiae.</title>
        <authorList>
            <person name="Hu Y."/>
            <person name="Rolfs A."/>
            <person name="Bhullar B."/>
            <person name="Murthy T.V.S."/>
            <person name="Zhu C."/>
            <person name="Berger M.F."/>
            <person name="Camargo A.A."/>
            <person name="Kelley F."/>
            <person name="McCarron S."/>
            <person name="Jepson D."/>
            <person name="Richardson A."/>
            <person name="Raphael J."/>
            <person name="Moreira D."/>
            <person name="Taycher E."/>
            <person name="Zuo D."/>
            <person name="Mohr S."/>
            <person name="Kane M.F."/>
            <person name="Williamson J."/>
            <person name="Simpson A.J.G."/>
            <person name="Bulyk M.L."/>
            <person name="Harlow E."/>
            <person name="Marsischky G."/>
            <person name="Kolodner R.D."/>
            <person name="LaBaer J."/>
        </authorList>
    </citation>
    <scope>NUCLEOTIDE SEQUENCE [GENOMIC DNA]</scope>
    <source>
        <strain>ATCC 204508 / S288c</strain>
    </source>
</reference>
<proteinExistence type="predicted"/>
<accession>Q12484</accession>
<accession>A0A1S0T0C0</accession>
<feature type="chain" id="PRO_0000299740" description="Uncharacterized protein YOR343C">
    <location>
        <begin position="1"/>
        <end position="108"/>
    </location>
</feature>
<keyword id="KW-1185">Reference proteome</keyword>
<gene>
    <name type="ordered locus">YOR343C</name>
    <name type="ORF">O6287</name>
</gene>
<sequence>MEHTAHIFPIIIKGSPPVMSSNPRRQYRLNLRSIKCLKEPRVRVWQAQWPLEPALSAAKMPRAAHAHAPHAFEIQASVPAGLQGSGYFAPSVRSDLRLPRSFLFLNKK</sequence>
<protein>
    <recommendedName>
        <fullName>Uncharacterized protein YOR343C</fullName>
    </recommendedName>
</protein>
<dbReference type="EMBL" id="X95720">
    <property type="protein sequence ID" value="CAA65031.1"/>
    <property type="molecule type" value="Genomic_DNA"/>
</dbReference>
<dbReference type="EMBL" id="Z75251">
    <property type="protein sequence ID" value="CAA99668.1"/>
    <property type="molecule type" value="Genomic_DNA"/>
</dbReference>
<dbReference type="EMBL" id="AY693247">
    <property type="protein sequence ID" value="AAT93266.1"/>
    <property type="molecule type" value="Genomic_DNA"/>
</dbReference>
<dbReference type="EMBL" id="BK006948">
    <property type="protein sequence ID" value="DAA80339.1"/>
    <property type="molecule type" value="Genomic_DNA"/>
</dbReference>
<dbReference type="PIR" id="S67252">
    <property type="entry name" value="S67252"/>
</dbReference>
<dbReference type="RefSeq" id="NP_001335819.1">
    <property type="nucleotide sequence ID" value="NM_001348881.1"/>
</dbReference>
<dbReference type="FunCoup" id="Q12484">
    <property type="interactions" value="25"/>
</dbReference>
<dbReference type="IntAct" id="Q12484">
    <property type="interactions" value="1"/>
</dbReference>
<dbReference type="STRING" id="4932.YOR343C"/>
<dbReference type="PaxDb" id="4932-YOR343C"/>
<dbReference type="EnsemblFungi" id="YOR343C_mRNA">
    <property type="protein sequence ID" value="YOR343C"/>
    <property type="gene ID" value="YOR343C"/>
</dbReference>
<dbReference type="GeneID" id="854521"/>
<dbReference type="AGR" id="SGD:S000005870"/>
<dbReference type="SGD" id="S000005870">
    <property type="gene designation" value="YOR343C"/>
</dbReference>
<dbReference type="HOGENOM" id="CLU_2199067_0_0_1"/>
<dbReference type="InParanoid" id="Q12484"/>
<dbReference type="OrthoDB" id="10366331at2759"/>
<dbReference type="PRO" id="PR:Q12484"/>
<dbReference type="Proteomes" id="UP000002311">
    <property type="component" value="Chromosome XV"/>
</dbReference>
<dbReference type="RNAct" id="Q12484">
    <property type="molecule type" value="protein"/>
</dbReference>